<gene>
    <name type="primary">eif2a</name>
</gene>
<reference key="1">
    <citation type="submission" date="2003-01" db="EMBL/GenBank/DDBJ databases">
        <authorList>
            <consortium name="NIH - Xenopus Gene Collection (XGC) project"/>
        </authorList>
    </citation>
    <scope>NUCLEOTIDE SEQUENCE [LARGE SCALE MRNA]</scope>
    <source>
        <tissue>Embryo</tissue>
    </source>
</reference>
<comment type="function">
    <text evidence="1">Functions in the early steps of protein synthesis of a small number of specific mRNAs. Acts by directing the binding of methionyl-tRNAi to 40S ribosomal subunits. In contrast to the eIF-2 complex, it binds methionyl-tRNAi to 40S subunits in a codon-dependent manner, whereas the eIF-2 complex binds methionyl-tRNAi to 40S subunits in a GTP-dependent manner.</text>
</comment>
<comment type="similarity">
    <text evidence="4">Belongs to the WD repeat EIF2A family.</text>
</comment>
<protein>
    <recommendedName>
        <fullName>Eukaryotic translation initiation factor 2A</fullName>
        <shortName>eIF-2A</shortName>
    </recommendedName>
</protein>
<sequence length="582" mass="64817">MAPPMPLLSVRGSDGIQLVLGPPKFTDSETFQRDPSKNCKVSRFTKDGKLFGWCNGEVINIVNCSDSKLLHTLDLPKVVSLEFSPKNTILATWQTYTTGKDGTAGTPNLQLYDLKSGKISNVKSFIQKKMENWSPHWSDDENICARNVNNEVHFFENNNFDTIANKLHLQKVSDFELSPGEQPCKVAVYVPGSKGAPSFVRLYQYPNFSGPNSALANKSFFKADRVAMLWNSKATAVLVTASTDVDKTGASYYGEQTLHYIAVNGESAVVQLPKNGPIYDVTWNKNATEFCVVYGFMPAKATVFNLKCDPIFDFGTGPRNAAFYSPQGHILVLAGFGNLRGQMEVWDVKKYKLISKPTASDATFFSWCPNGEHIITATCSPRLRVGNGYKIWHYTGTLLHKYDVPANSELWQVSWQPFPDGVFPAKAIVYQAVPGDLPTQESKPAEAYRPPALRNKPVSSYKLHEDEPPQSMMPQSTEKPMSKTALKNQKKREAKKAAKQESKMDEPAESDSTNVQNNTPVAVNTGDPETDKKIKNLKKKLKAIEQLKELQSSGKTLEKNQIEKIQKEDILLKELEDLEIGV</sequence>
<keyword id="KW-0175">Coiled coil</keyword>
<keyword id="KW-0396">Initiation factor</keyword>
<keyword id="KW-0648">Protein biosynthesis</keyword>
<keyword id="KW-1185">Reference proteome</keyword>
<keyword id="KW-0677">Repeat</keyword>
<keyword id="KW-0810">Translation regulation</keyword>
<keyword id="KW-0853">WD repeat</keyword>
<proteinExistence type="evidence at transcript level"/>
<evidence type="ECO:0000250" key="1">
    <source>
        <dbReference type="UniProtKB" id="Q9BY44"/>
    </source>
</evidence>
<evidence type="ECO:0000255" key="2"/>
<evidence type="ECO:0000256" key="3">
    <source>
        <dbReference type="SAM" id="MobiDB-lite"/>
    </source>
</evidence>
<evidence type="ECO:0000305" key="4"/>
<dbReference type="EMBL" id="BC044026">
    <property type="protein sequence ID" value="AAH44026.1"/>
    <property type="molecule type" value="mRNA"/>
</dbReference>
<dbReference type="SMR" id="Q7ZY11"/>
<dbReference type="AGR" id="Xenbase:XB-GENE-944999"/>
<dbReference type="Xenbase" id="XB-GENE-944999">
    <property type="gene designation" value="eif2a.S"/>
</dbReference>
<dbReference type="Proteomes" id="UP000186698">
    <property type="component" value="Unplaced"/>
</dbReference>
<dbReference type="GO" id="GO:0022627">
    <property type="term" value="C:cytosolic small ribosomal subunit"/>
    <property type="evidence" value="ECO:0000318"/>
    <property type="project" value="GO_Central"/>
</dbReference>
<dbReference type="GO" id="GO:0003729">
    <property type="term" value="F:mRNA binding"/>
    <property type="evidence" value="ECO:0000318"/>
    <property type="project" value="GO_Central"/>
</dbReference>
<dbReference type="GO" id="GO:0043022">
    <property type="term" value="F:ribosome binding"/>
    <property type="evidence" value="ECO:0000318"/>
    <property type="project" value="GO_Central"/>
</dbReference>
<dbReference type="GO" id="GO:0003743">
    <property type="term" value="F:translation initiation factor activity"/>
    <property type="evidence" value="ECO:0000318"/>
    <property type="project" value="GO_Central"/>
</dbReference>
<dbReference type="GO" id="GO:0000049">
    <property type="term" value="F:tRNA binding"/>
    <property type="evidence" value="ECO:0000318"/>
    <property type="project" value="GO_Central"/>
</dbReference>
<dbReference type="GO" id="GO:0006417">
    <property type="term" value="P:regulation of translation"/>
    <property type="evidence" value="ECO:0007669"/>
    <property type="project" value="UniProtKB-KW"/>
</dbReference>
<dbReference type="FunFam" id="2.130.10.10:FF:000149">
    <property type="entry name" value="Eukaryotic translation initiation factor 2A"/>
    <property type="match status" value="1"/>
</dbReference>
<dbReference type="Gene3D" id="2.130.10.10">
    <property type="entry name" value="YVTN repeat-like/Quinoprotein amine dehydrogenase"/>
    <property type="match status" value="1"/>
</dbReference>
<dbReference type="InterPro" id="IPR011387">
    <property type="entry name" value="TIF2A"/>
</dbReference>
<dbReference type="InterPro" id="IPR013979">
    <property type="entry name" value="TIF_beta_prop-like"/>
</dbReference>
<dbReference type="InterPro" id="IPR015943">
    <property type="entry name" value="WD40/YVTN_repeat-like_dom_sf"/>
</dbReference>
<dbReference type="PANTHER" id="PTHR13227">
    <property type="entry name" value="EUKARYOTIC TRANSLATION INITIATION FACTOR 2A"/>
    <property type="match status" value="1"/>
</dbReference>
<dbReference type="PANTHER" id="PTHR13227:SF0">
    <property type="entry name" value="EUKARYOTIC TRANSLATION INITIATION FACTOR 2A"/>
    <property type="match status" value="1"/>
</dbReference>
<dbReference type="Pfam" id="PF08662">
    <property type="entry name" value="eIF2A"/>
    <property type="match status" value="1"/>
</dbReference>
<dbReference type="PIRSF" id="PIRSF017222">
    <property type="entry name" value="eIF2A"/>
    <property type="match status" value="1"/>
</dbReference>
<dbReference type="SUPFAM" id="SSF82171">
    <property type="entry name" value="DPP6 N-terminal domain-like"/>
    <property type="match status" value="1"/>
</dbReference>
<accession>Q7ZY11</accession>
<name>EIF2A_XENLA</name>
<feature type="chain" id="PRO_0000286080" description="Eukaryotic translation initiation factor 2A">
    <location>
        <begin position="1"/>
        <end position="582"/>
    </location>
</feature>
<feature type="repeat" description="WD 1">
    <location>
        <begin position="21"/>
        <end position="63"/>
    </location>
</feature>
<feature type="repeat" description="WD 2">
    <location>
        <begin position="73"/>
        <end position="124"/>
    </location>
</feature>
<feature type="repeat" description="WD 3">
    <location>
        <begin position="273"/>
        <end position="314"/>
    </location>
</feature>
<feature type="repeat" description="WD 4">
    <location>
        <begin position="358"/>
        <end position="402"/>
    </location>
</feature>
<feature type="region of interest" description="Disordered" evidence="3">
    <location>
        <begin position="436"/>
        <end position="533"/>
    </location>
</feature>
<feature type="coiled-coil region" evidence="2">
    <location>
        <begin position="482"/>
        <end position="580"/>
    </location>
</feature>
<feature type="compositionally biased region" description="Basic and acidic residues" evidence="3">
    <location>
        <begin position="495"/>
        <end position="506"/>
    </location>
</feature>
<feature type="compositionally biased region" description="Polar residues" evidence="3">
    <location>
        <begin position="510"/>
        <end position="522"/>
    </location>
</feature>
<organism>
    <name type="scientific">Xenopus laevis</name>
    <name type="common">African clawed frog</name>
    <dbReference type="NCBI Taxonomy" id="8355"/>
    <lineage>
        <taxon>Eukaryota</taxon>
        <taxon>Metazoa</taxon>
        <taxon>Chordata</taxon>
        <taxon>Craniata</taxon>
        <taxon>Vertebrata</taxon>
        <taxon>Euteleostomi</taxon>
        <taxon>Amphibia</taxon>
        <taxon>Batrachia</taxon>
        <taxon>Anura</taxon>
        <taxon>Pipoidea</taxon>
        <taxon>Pipidae</taxon>
        <taxon>Xenopodinae</taxon>
        <taxon>Xenopus</taxon>
        <taxon>Xenopus</taxon>
    </lineage>
</organism>